<comment type="function">
    <text evidence="1">ATP-dependent RNA helicase required for mitochondrial splicing of group I and II introns. Also required for efficient mitochondrial translation (By similarity).</text>
</comment>
<comment type="catalytic activity">
    <reaction>
        <text>ATP + H2O = ADP + phosphate + H(+)</text>
        <dbReference type="Rhea" id="RHEA:13065"/>
        <dbReference type="ChEBI" id="CHEBI:15377"/>
        <dbReference type="ChEBI" id="CHEBI:15378"/>
        <dbReference type="ChEBI" id="CHEBI:30616"/>
        <dbReference type="ChEBI" id="CHEBI:43474"/>
        <dbReference type="ChEBI" id="CHEBI:456216"/>
        <dbReference type="EC" id="3.6.4.13"/>
    </reaction>
</comment>
<comment type="subcellular location">
    <subcellularLocation>
        <location evidence="1">Mitochondrion matrix</location>
    </subcellularLocation>
</comment>
<comment type="domain">
    <text>The Q motif is unique to and characteristic of the DEAD box family of RNA helicases and controls ATP binding and hydrolysis.</text>
</comment>
<comment type="similarity">
    <text evidence="6">Belongs to the DEAD box helicase family. DDX18/HAS1 subfamily.</text>
</comment>
<sequence>MFRVTGIATARAVALQPFRAPLGVIRRFGISATASYEFQHGHDMQSRNGSRWDSRRQGDRRSSRWEGRGSDREDGERGSRGGMWRKPQGRRGRTDGAAREGFSLGPNTEVVRVADEAAGVESTPRTLVEEGVLSNELYEMLQSRGFDKLTPVQQKTLKPILQTEHDVVARAKTGTGKTLAFLMPLFQRLLEGPPSENVKAVVIAPTRDLAAQIFNEINEMRNANRKLRRFNAVVMMGGSSRTETFRSLERRRPNIVVATPGRLIDMLEACGPKYFTEVDFKVLDEADTLLEIGFKQALEQINDILNQLNQKGTTHIRTLLVSATLDDKVQSLANSIMNHAKCLFIDTVDPNEQATNENIAQKVVISKDFADNITASLYKIREEASANPKLKAIVFMPTIVAVEYWGELLQSQCRGTPVLLFHGGLSQGRRNSTMKRFRAMDSGILVCTDVAARGMDVSDVQHVYQVGVPTSPDNYIHRIGRTGRAGRKGSSTIFLAEHELCILDILRRKNNVVISDQETFDAAAQELSDVREAFSLDRDRLHDFLLKNLSFYRGSQGEYDFPLEAYISIARAYGTLLGDSNQRLTLSGRMLTTFVPNHPAVCSLFNIIGPVNSKSSYGFRDTNKRHRRGRLDDSGRLEYSKKRHSYARSYSPSISDGF</sequence>
<protein>
    <recommendedName>
        <fullName>ATP-dependent RNA helicase MSS116, mitochondrial</fullName>
        <ecNumber>3.6.4.13</ecNumber>
    </recommendedName>
</protein>
<gene>
    <name type="primary">MSS116</name>
    <name type="ordered locus">AGL112C</name>
</gene>
<reference key="1">
    <citation type="journal article" date="2004" name="Science">
        <title>The Ashbya gossypii genome as a tool for mapping the ancient Saccharomyces cerevisiae genome.</title>
        <authorList>
            <person name="Dietrich F.S."/>
            <person name="Voegeli S."/>
            <person name="Brachat S."/>
            <person name="Lerch A."/>
            <person name="Gates K."/>
            <person name="Steiner S."/>
            <person name="Mohr C."/>
            <person name="Poehlmann R."/>
            <person name="Luedi P."/>
            <person name="Choi S."/>
            <person name="Wing R.A."/>
            <person name="Flavier A."/>
            <person name="Gaffney T.D."/>
            <person name="Philippsen P."/>
        </authorList>
    </citation>
    <scope>NUCLEOTIDE SEQUENCE [LARGE SCALE GENOMIC DNA]</scope>
    <source>
        <strain>ATCC 10895 / CBS 109.51 / FGSC 9923 / NRRL Y-1056</strain>
    </source>
</reference>
<reference key="2">
    <citation type="journal article" date="2013" name="G3 (Bethesda)">
        <title>Genomes of Ashbya fungi isolated from insects reveal four mating-type loci, numerous translocations, lack of transposons, and distinct gene duplications.</title>
        <authorList>
            <person name="Dietrich F.S."/>
            <person name="Voegeli S."/>
            <person name="Kuo S."/>
            <person name="Philippsen P."/>
        </authorList>
    </citation>
    <scope>GENOME REANNOTATION</scope>
    <source>
        <strain>ATCC 10895 / CBS 109.51 / FGSC 9923 / NRRL Y-1056</strain>
    </source>
</reference>
<keyword id="KW-0067">ATP-binding</keyword>
<keyword id="KW-0347">Helicase</keyword>
<keyword id="KW-0378">Hydrolase</keyword>
<keyword id="KW-0496">Mitochondrion</keyword>
<keyword id="KW-0507">mRNA processing</keyword>
<keyword id="KW-0508">mRNA splicing</keyword>
<keyword id="KW-0547">Nucleotide-binding</keyword>
<keyword id="KW-1185">Reference proteome</keyword>
<keyword id="KW-0694">RNA-binding</keyword>
<keyword id="KW-0809">Transit peptide</keyword>
<keyword id="KW-0810">Translation regulation</keyword>
<feature type="transit peptide" description="Mitochondrion" evidence="2">
    <location>
        <begin position="1"/>
        <end position="35"/>
    </location>
</feature>
<feature type="chain" id="PRO_0000227943" description="ATP-dependent RNA helicase MSS116, mitochondrial">
    <location>
        <begin position="36"/>
        <end position="658"/>
    </location>
</feature>
<feature type="domain" description="Helicase ATP-binding" evidence="3">
    <location>
        <begin position="158"/>
        <end position="343"/>
    </location>
</feature>
<feature type="domain" description="Helicase C-terminal" evidence="4">
    <location>
        <begin position="372"/>
        <end position="528"/>
    </location>
</feature>
<feature type="region of interest" description="Disordered" evidence="5">
    <location>
        <begin position="40"/>
        <end position="104"/>
    </location>
</feature>
<feature type="short sequence motif" description="Q motif">
    <location>
        <begin position="126"/>
        <end position="154"/>
    </location>
</feature>
<feature type="short sequence motif" description="DEAD box">
    <location>
        <begin position="284"/>
        <end position="287"/>
    </location>
</feature>
<feature type="compositionally biased region" description="Basic and acidic residues" evidence="5">
    <location>
        <begin position="40"/>
        <end position="79"/>
    </location>
</feature>
<feature type="binding site" evidence="3">
    <location>
        <begin position="171"/>
        <end position="178"/>
    </location>
    <ligand>
        <name>ATP</name>
        <dbReference type="ChEBI" id="CHEBI:30616"/>
    </ligand>
</feature>
<organism>
    <name type="scientific">Eremothecium gossypii (strain ATCC 10895 / CBS 109.51 / FGSC 9923 / NRRL Y-1056)</name>
    <name type="common">Yeast</name>
    <name type="synonym">Ashbya gossypii</name>
    <dbReference type="NCBI Taxonomy" id="284811"/>
    <lineage>
        <taxon>Eukaryota</taxon>
        <taxon>Fungi</taxon>
        <taxon>Dikarya</taxon>
        <taxon>Ascomycota</taxon>
        <taxon>Saccharomycotina</taxon>
        <taxon>Saccharomycetes</taxon>
        <taxon>Saccharomycetales</taxon>
        <taxon>Saccharomycetaceae</taxon>
        <taxon>Eremothecium</taxon>
    </lineage>
</organism>
<dbReference type="EC" id="3.6.4.13"/>
<dbReference type="EMBL" id="AE016820">
    <property type="protein sequence ID" value="AAS54379.1"/>
    <property type="molecule type" value="Genomic_DNA"/>
</dbReference>
<dbReference type="RefSeq" id="NP_986555.1">
    <property type="nucleotide sequence ID" value="NM_211617.1"/>
</dbReference>
<dbReference type="SMR" id="Q750Q4"/>
<dbReference type="FunCoup" id="Q750Q4">
    <property type="interactions" value="235"/>
</dbReference>
<dbReference type="STRING" id="284811.Q750Q4"/>
<dbReference type="EnsemblFungi" id="AAS54379">
    <property type="protein sequence ID" value="AAS54379"/>
    <property type="gene ID" value="AGOS_AGL112C"/>
</dbReference>
<dbReference type="GeneID" id="4622854"/>
<dbReference type="KEGG" id="ago:AGOS_AGL112C"/>
<dbReference type="eggNOG" id="KOG0342">
    <property type="taxonomic scope" value="Eukaryota"/>
</dbReference>
<dbReference type="HOGENOM" id="CLU_003041_26_6_1"/>
<dbReference type="InParanoid" id="Q750Q4"/>
<dbReference type="OrthoDB" id="193716at2759"/>
<dbReference type="Proteomes" id="UP000000591">
    <property type="component" value="Chromosome VII"/>
</dbReference>
<dbReference type="GO" id="GO:0005761">
    <property type="term" value="C:mitochondrial ribosome"/>
    <property type="evidence" value="ECO:0007669"/>
    <property type="project" value="EnsemblFungi"/>
</dbReference>
<dbReference type="GO" id="GO:0005739">
    <property type="term" value="C:mitochondrion"/>
    <property type="evidence" value="ECO:0000318"/>
    <property type="project" value="GO_Central"/>
</dbReference>
<dbReference type="GO" id="GO:0005524">
    <property type="term" value="F:ATP binding"/>
    <property type="evidence" value="ECO:0007669"/>
    <property type="project" value="UniProtKB-KW"/>
</dbReference>
<dbReference type="GO" id="GO:0016887">
    <property type="term" value="F:ATP hydrolysis activity"/>
    <property type="evidence" value="ECO:0007669"/>
    <property type="project" value="RHEA"/>
</dbReference>
<dbReference type="GO" id="GO:0051880">
    <property type="term" value="F:G-quadruplex DNA binding"/>
    <property type="evidence" value="ECO:0007669"/>
    <property type="project" value="EnsemblFungi"/>
</dbReference>
<dbReference type="GO" id="GO:0002151">
    <property type="term" value="F:G-quadruplex RNA binding"/>
    <property type="evidence" value="ECO:0007669"/>
    <property type="project" value="EnsemblFungi"/>
</dbReference>
<dbReference type="GO" id="GO:0003724">
    <property type="term" value="F:RNA helicase activity"/>
    <property type="evidence" value="ECO:0007669"/>
    <property type="project" value="UniProtKB-EC"/>
</dbReference>
<dbReference type="GO" id="GO:0033592">
    <property type="term" value="F:RNA strand annealing activity"/>
    <property type="evidence" value="ECO:0007669"/>
    <property type="project" value="EnsemblFungi"/>
</dbReference>
<dbReference type="GO" id="GO:0000372">
    <property type="term" value="P:Group I intron splicing"/>
    <property type="evidence" value="ECO:0007669"/>
    <property type="project" value="EnsemblFungi"/>
</dbReference>
<dbReference type="GO" id="GO:0000373">
    <property type="term" value="P:Group II intron splicing"/>
    <property type="evidence" value="ECO:0007669"/>
    <property type="project" value="EnsemblFungi"/>
</dbReference>
<dbReference type="GO" id="GO:0000963">
    <property type="term" value="P:mitochondrial RNA processing"/>
    <property type="evidence" value="ECO:0007669"/>
    <property type="project" value="EnsemblFungi"/>
</dbReference>
<dbReference type="GO" id="GO:0070125">
    <property type="term" value="P:mitochondrial translational elongation"/>
    <property type="evidence" value="ECO:0007669"/>
    <property type="project" value="EnsemblFungi"/>
</dbReference>
<dbReference type="GO" id="GO:0070124">
    <property type="term" value="P:mitochondrial translational initiation"/>
    <property type="evidence" value="ECO:0007669"/>
    <property type="project" value="EnsemblFungi"/>
</dbReference>
<dbReference type="GO" id="GO:0006397">
    <property type="term" value="P:mRNA processing"/>
    <property type="evidence" value="ECO:0007669"/>
    <property type="project" value="UniProtKB-KW"/>
</dbReference>
<dbReference type="GO" id="GO:0006417">
    <property type="term" value="P:regulation of translation"/>
    <property type="evidence" value="ECO:0007669"/>
    <property type="project" value="UniProtKB-KW"/>
</dbReference>
<dbReference type="GO" id="GO:0034337">
    <property type="term" value="P:RNA folding"/>
    <property type="evidence" value="ECO:0007669"/>
    <property type="project" value="EnsemblFungi"/>
</dbReference>
<dbReference type="GO" id="GO:0006364">
    <property type="term" value="P:rRNA processing"/>
    <property type="evidence" value="ECO:0007669"/>
    <property type="project" value="UniProtKB-ARBA"/>
</dbReference>
<dbReference type="GO" id="GO:0006392">
    <property type="term" value="P:transcription elongation by mitochondrial RNA polymerase"/>
    <property type="evidence" value="ECO:0007669"/>
    <property type="project" value="EnsemblFungi"/>
</dbReference>
<dbReference type="CDD" id="cd17964">
    <property type="entry name" value="DEADc_MSS116"/>
    <property type="match status" value="1"/>
</dbReference>
<dbReference type="CDD" id="cd18787">
    <property type="entry name" value="SF2_C_DEAD"/>
    <property type="match status" value="1"/>
</dbReference>
<dbReference type="Gene3D" id="3.40.50.300">
    <property type="entry name" value="P-loop containing nucleotide triphosphate hydrolases"/>
    <property type="match status" value="2"/>
</dbReference>
<dbReference type="InterPro" id="IPR011545">
    <property type="entry name" value="DEAD/DEAH_box_helicase_dom"/>
</dbReference>
<dbReference type="InterPro" id="IPR050079">
    <property type="entry name" value="DEAD_box_RNA_helicase"/>
</dbReference>
<dbReference type="InterPro" id="IPR014001">
    <property type="entry name" value="Helicase_ATP-bd"/>
</dbReference>
<dbReference type="InterPro" id="IPR001650">
    <property type="entry name" value="Helicase_C-like"/>
</dbReference>
<dbReference type="InterPro" id="IPR027417">
    <property type="entry name" value="P-loop_NTPase"/>
</dbReference>
<dbReference type="PANTHER" id="PTHR47959:SF1">
    <property type="entry name" value="ATP-DEPENDENT RNA HELICASE DBPA"/>
    <property type="match status" value="1"/>
</dbReference>
<dbReference type="PANTHER" id="PTHR47959">
    <property type="entry name" value="ATP-DEPENDENT RNA HELICASE RHLE-RELATED"/>
    <property type="match status" value="1"/>
</dbReference>
<dbReference type="Pfam" id="PF00270">
    <property type="entry name" value="DEAD"/>
    <property type="match status" value="1"/>
</dbReference>
<dbReference type="Pfam" id="PF00271">
    <property type="entry name" value="Helicase_C"/>
    <property type="match status" value="1"/>
</dbReference>
<dbReference type="SMART" id="SM00487">
    <property type="entry name" value="DEXDc"/>
    <property type="match status" value="1"/>
</dbReference>
<dbReference type="SMART" id="SM00490">
    <property type="entry name" value="HELICc"/>
    <property type="match status" value="1"/>
</dbReference>
<dbReference type="SUPFAM" id="SSF52540">
    <property type="entry name" value="P-loop containing nucleoside triphosphate hydrolases"/>
    <property type="match status" value="1"/>
</dbReference>
<dbReference type="PROSITE" id="PS51192">
    <property type="entry name" value="HELICASE_ATP_BIND_1"/>
    <property type="match status" value="1"/>
</dbReference>
<dbReference type="PROSITE" id="PS51194">
    <property type="entry name" value="HELICASE_CTER"/>
    <property type="match status" value="1"/>
</dbReference>
<dbReference type="PROSITE" id="PS51195">
    <property type="entry name" value="Q_MOTIF"/>
    <property type="match status" value="1"/>
</dbReference>
<evidence type="ECO:0000250" key="1"/>
<evidence type="ECO:0000255" key="2"/>
<evidence type="ECO:0000255" key="3">
    <source>
        <dbReference type="PROSITE-ProRule" id="PRU00541"/>
    </source>
</evidence>
<evidence type="ECO:0000255" key="4">
    <source>
        <dbReference type="PROSITE-ProRule" id="PRU00542"/>
    </source>
</evidence>
<evidence type="ECO:0000256" key="5">
    <source>
        <dbReference type="SAM" id="MobiDB-lite"/>
    </source>
</evidence>
<evidence type="ECO:0000305" key="6"/>
<name>MS116_EREGS</name>
<accession>Q750Q4</accession>
<proteinExistence type="inferred from homology"/>